<protein>
    <recommendedName>
        <fullName evidence="1">Peptide deformylase</fullName>
        <shortName evidence="1">PDF</shortName>
        <ecNumber evidence="1">3.5.1.88</ecNumber>
    </recommendedName>
    <alternativeName>
        <fullName evidence="1">Polypeptide deformylase</fullName>
    </alternativeName>
</protein>
<name>DEF_SALDC</name>
<evidence type="ECO:0000255" key="1">
    <source>
        <dbReference type="HAMAP-Rule" id="MF_00163"/>
    </source>
</evidence>
<keyword id="KW-0378">Hydrolase</keyword>
<keyword id="KW-0408">Iron</keyword>
<keyword id="KW-0479">Metal-binding</keyword>
<keyword id="KW-0648">Protein biosynthesis</keyword>
<organism>
    <name type="scientific">Salmonella dublin (strain CT_02021853)</name>
    <dbReference type="NCBI Taxonomy" id="439851"/>
    <lineage>
        <taxon>Bacteria</taxon>
        <taxon>Pseudomonadati</taxon>
        <taxon>Pseudomonadota</taxon>
        <taxon>Gammaproteobacteria</taxon>
        <taxon>Enterobacterales</taxon>
        <taxon>Enterobacteriaceae</taxon>
        <taxon>Salmonella</taxon>
    </lineage>
</organism>
<proteinExistence type="inferred from homology"/>
<comment type="function">
    <text evidence="1">Removes the formyl group from the N-terminal Met of newly synthesized proteins. Requires at least a dipeptide for an efficient rate of reaction. N-terminal L-methionine is a prerequisite for activity but the enzyme has broad specificity at other positions.</text>
</comment>
<comment type="catalytic activity">
    <reaction evidence="1">
        <text>N-terminal N-formyl-L-methionyl-[peptide] + H2O = N-terminal L-methionyl-[peptide] + formate</text>
        <dbReference type="Rhea" id="RHEA:24420"/>
        <dbReference type="Rhea" id="RHEA-COMP:10639"/>
        <dbReference type="Rhea" id="RHEA-COMP:10640"/>
        <dbReference type="ChEBI" id="CHEBI:15377"/>
        <dbReference type="ChEBI" id="CHEBI:15740"/>
        <dbReference type="ChEBI" id="CHEBI:49298"/>
        <dbReference type="ChEBI" id="CHEBI:64731"/>
        <dbReference type="EC" id="3.5.1.88"/>
    </reaction>
</comment>
<comment type="cofactor">
    <cofactor evidence="1">
        <name>Fe(2+)</name>
        <dbReference type="ChEBI" id="CHEBI:29033"/>
    </cofactor>
    <text evidence="1">Binds 1 Fe(2+) ion.</text>
</comment>
<comment type="similarity">
    <text evidence="1">Belongs to the polypeptide deformylase family.</text>
</comment>
<feature type="chain" id="PRO_1000097337" description="Peptide deformylase">
    <location>
        <begin position="1"/>
        <end position="169"/>
    </location>
</feature>
<feature type="active site" evidence="1">
    <location>
        <position position="134"/>
    </location>
</feature>
<feature type="binding site" evidence="1">
    <location>
        <position position="91"/>
    </location>
    <ligand>
        <name>Fe cation</name>
        <dbReference type="ChEBI" id="CHEBI:24875"/>
    </ligand>
</feature>
<feature type="binding site" evidence="1">
    <location>
        <position position="133"/>
    </location>
    <ligand>
        <name>Fe cation</name>
        <dbReference type="ChEBI" id="CHEBI:24875"/>
    </ligand>
</feature>
<feature type="binding site" evidence="1">
    <location>
        <position position="137"/>
    </location>
    <ligand>
        <name>Fe cation</name>
        <dbReference type="ChEBI" id="CHEBI:24875"/>
    </ligand>
</feature>
<accession>B5FJI2</accession>
<dbReference type="EC" id="3.5.1.88" evidence="1"/>
<dbReference type="EMBL" id="CP001144">
    <property type="protein sequence ID" value="ACH77355.1"/>
    <property type="molecule type" value="Genomic_DNA"/>
</dbReference>
<dbReference type="RefSeq" id="WP_000114987.1">
    <property type="nucleotide sequence ID" value="NC_011205.1"/>
</dbReference>
<dbReference type="SMR" id="B5FJI2"/>
<dbReference type="KEGG" id="sed:SeD_A3773"/>
<dbReference type="HOGENOM" id="CLU_061901_2_1_6"/>
<dbReference type="Proteomes" id="UP000008322">
    <property type="component" value="Chromosome"/>
</dbReference>
<dbReference type="GO" id="GO:0046872">
    <property type="term" value="F:metal ion binding"/>
    <property type="evidence" value="ECO:0007669"/>
    <property type="project" value="UniProtKB-KW"/>
</dbReference>
<dbReference type="GO" id="GO:0042586">
    <property type="term" value="F:peptide deformylase activity"/>
    <property type="evidence" value="ECO:0007669"/>
    <property type="project" value="UniProtKB-UniRule"/>
</dbReference>
<dbReference type="GO" id="GO:0043686">
    <property type="term" value="P:co-translational protein modification"/>
    <property type="evidence" value="ECO:0007669"/>
    <property type="project" value="TreeGrafter"/>
</dbReference>
<dbReference type="GO" id="GO:0006412">
    <property type="term" value="P:translation"/>
    <property type="evidence" value="ECO:0007669"/>
    <property type="project" value="UniProtKB-UniRule"/>
</dbReference>
<dbReference type="CDD" id="cd00487">
    <property type="entry name" value="Pep_deformylase"/>
    <property type="match status" value="1"/>
</dbReference>
<dbReference type="FunFam" id="3.90.45.10:FF:000001">
    <property type="entry name" value="Peptide deformylase"/>
    <property type="match status" value="1"/>
</dbReference>
<dbReference type="Gene3D" id="3.90.45.10">
    <property type="entry name" value="Peptide deformylase"/>
    <property type="match status" value="1"/>
</dbReference>
<dbReference type="HAMAP" id="MF_00163">
    <property type="entry name" value="Pep_deformylase"/>
    <property type="match status" value="1"/>
</dbReference>
<dbReference type="InterPro" id="IPR023635">
    <property type="entry name" value="Peptide_deformylase"/>
</dbReference>
<dbReference type="InterPro" id="IPR036821">
    <property type="entry name" value="Peptide_deformylase_sf"/>
</dbReference>
<dbReference type="NCBIfam" id="TIGR00079">
    <property type="entry name" value="pept_deformyl"/>
    <property type="match status" value="1"/>
</dbReference>
<dbReference type="NCBIfam" id="NF001159">
    <property type="entry name" value="PRK00150.1-3"/>
    <property type="match status" value="1"/>
</dbReference>
<dbReference type="PANTHER" id="PTHR10458">
    <property type="entry name" value="PEPTIDE DEFORMYLASE"/>
    <property type="match status" value="1"/>
</dbReference>
<dbReference type="PANTHER" id="PTHR10458:SF21">
    <property type="entry name" value="PEPTIDE DEFORMYLASE"/>
    <property type="match status" value="1"/>
</dbReference>
<dbReference type="Pfam" id="PF01327">
    <property type="entry name" value="Pep_deformylase"/>
    <property type="match status" value="1"/>
</dbReference>
<dbReference type="PIRSF" id="PIRSF004749">
    <property type="entry name" value="Pep_def"/>
    <property type="match status" value="1"/>
</dbReference>
<dbReference type="PRINTS" id="PR01576">
    <property type="entry name" value="PDEFORMYLASE"/>
</dbReference>
<dbReference type="SUPFAM" id="SSF56420">
    <property type="entry name" value="Peptide deformylase"/>
    <property type="match status" value="1"/>
</dbReference>
<reference key="1">
    <citation type="journal article" date="2011" name="J. Bacteriol.">
        <title>Comparative genomics of 28 Salmonella enterica isolates: evidence for CRISPR-mediated adaptive sublineage evolution.</title>
        <authorList>
            <person name="Fricke W.F."/>
            <person name="Mammel M.K."/>
            <person name="McDermott P.F."/>
            <person name="Tartera C."/>
            <person name="White D.G."/>
            <person name="Leclerc J.E."/>
            <person name="Ravel J."/>
            <person name="Cebula T.A."/>
        </authorList>
    </citation>
    <scope>NUCLEOTIDE SEQUENCE [LARGE SCALE GENOMIC DNA]</scope>
    <source>
        <strain>CT_02021853</strain>
    </source>
</reference>
<sequence length="169" mass="19282">MSVLQVLHIPDERLRKVAKPVEEVNAEIQRIVDDMFETMYAEEGIGLAATQVDIHQRIIVIDVSENRDERLVLINPELLEKSGETGIEEGCLSIPEQRALVPRAEKVKIRALDRDGNPFELEADGLLAICIQHEMDHLVGKLFIDYLSPLKQQRIRQKVEKLDRLNARA</sequence>
<gene>
    <name evidence="1" type="primary">def</name>
    <name type="ordered locus">SeD_A3773</name>
</gene>